<evidence type="ECO:0000255" key="1">
    <source>
        <dbReference type="HAMAP-Rule" id="MF_00480"/>
    </source>
</evidence>
<evidence type="ECO:0000305" key="2"/>
<protein>
    <recommendedName>
        <fullName evidence="1">Small ribosomal subunit protein uS7</fullName>
    </recommendedName>
    <alternativeName>
        <fullName evidence="2">30S ribosomal protein S7</fullName>
    </alternativeName>
</protein>
<accession>C5D3R3</accession>
<reference key="1">
    <citation type="submission" date="2009-06" db="EMBL/GenBank/DDBJ databases">
        <title>Complete sequence of chromosome of Geopacillus sp. WCH70.</title>
        <authorList>
            <consortium name="US DOE Joint Genome Institute"/>
            <person name="Lucas S."/>
            <person name="Copeland A."/>
            <person name="Lapidus A."/>
            <person name="Glavina del Rio T."/>
            <person name="Dalin E."/>
            <person name="Tice H."/>
            <person name="Bruce D."/>
            <person name="Goodwin L."/>
            <person name="Pitluck S."/>
            <person name="Chertkov O."/>
            <person name="Brettin T."/>
            <person name="Detter J.C."/>
            <person name="Han C."/>
            <person name="Larimer F."/>
            <person name="Land M."/>
            <person name="Hauser L."/>
            <person name="Kyrpides N."/>
            <person name="Mikhailova N."/>
            <person name="Brumm P."/>
            <person name="Mead D.A."/>
            <person name="Richardson P."/>
        </authorList>
    </citation>
    <scope>NUCLEOTIDE SEQUENCE [LARGE SCALE GENOMIC DNA]</scope>
    <source>
        <strain>WCH70</strain>
    </source>
</reference>
<feature type="chain" id="PRO_1000206406" description="Small ribosomal subunit protein uS7">
    <location>
        <begin position="1"/>
        <end position="156"/>
    </location>
</feature>
<organism>
    <name type="scientific">Geobacillus sp. (strain WCH70)</name>
    <dbReference type="NCBI Taxonomy" id="471223"/>
    <lineage>
        <taxon>Bacteria</taxon>
        <taxon>Bacillati</taxon>
        <taxon>Bacillota</taxon>
        <taxon>Bacilli</taxon>
        <taxon>Bacillales</taxon>
        <taxon>Anoxybacillaceae</taxon>
        <taxon>Geobacillus</taxon>
    </lineage>
</organism>
<sequence length="156" mass="18027">MPRRGPVPKRDVLPDPIYNSKLVTRLINKIMIDGKKGKAQKILYTAFDIIRERTGKDPMEVFEQALKNVMPVLEVRARRVGGANYQVPVEVRPDRRVTLGLRWLVQYARLRGERTMEERLANEIMDAANNTGAAVKKREDTHKMAEANKAFAHYRW</sequence>
<dbReference type="EMBL" id="CP001638">
    <property type="protein sequence ID" value="ACS23047.1"/>
    <property type="molecule type" value="Genomic_DNA"/>
</dbReference>
<dbReference type="SMR" id="C5D3R3"/>
<dbReference type="STRING" id="471223.GWCH70_0107"/>
<dbReference type="KEGG" id="gwc:GWCH70_0107"/>
<dbReference type="eggNOG" id="COG0049">
    <property type="taxonomic scope" value="Bacteria"/>
</dbReference>
<dbReference type="HOGENOM" id="CLU_072226_1_1_9"/>
<dbReference type="OrthoDB" id="9807653at2"/>
<dbReference type="GO" id="GO:0015935">
    <property type="term" value="C:small ribosomal subunit"/>
    <property type="evidence" value="ECO:0007669"/>
    <property type="project" value="InterPro"/>
</dbReference>
<dbReference type="GO" id="GO:0019843">
    <property type="term" value="F:rRNA binding"/>
    <property type="evidence" value="ECO:0007669"/>
    <property type="project" value="UniProtKB-UniRule"/>
</dbReference>
<dbReference type="GO" id="GO:0003735">
    <property type="term" value="F:structural constituent of ribosome"/>
    <property type="evidence" value="ECO:0007669"/>
    <property type="project" value="InterPro"/>
</dbReference>
<dbReference type="GO" id="GO:0000049">
    <property type="term" value="F:tRNA binding"/>
    <property type="evidence" value="ECO:0007669"/>
    <property type="project" value="UniProtKB-UniRule"/>
</dbReference>
<dbReference type="GO" id="GO:0006412">
    <property type="term" value="P:translation"/>
    <property type="evidence" value="ECO:0007669"/>
    <property type="project" value="UniProtKB-UniRule"/>
</dbReference>
<dbReference type="CDD" id="cd14869">
    <property type="entry name" value="uS7_Bacteria"/>
    <property type="match status" value="1"/>
</dbReference>
<dbReference type="FunFam" id="1.10.455.10:FF:000001">
    <property type="entry name" value="30S ribosomal protein S7"/>
    <property type="match status" value="1"/>
</dbReference>
<dbReference type="Gene3D" id="1.10.455.10">
    <property type="entry name" value="Ribosomal protein S7 domain"/>
    <property type="match status" value="1"/>
</dbReference>
<dbReference type="HAMAP" id="MF_00480_B">
    <property type="entry name" value="Ribosomal_uS7_B"/>
    <property type="match status" value="1"/>
</dbReference>
<dbReference type="InterPro" id="IPR000235">
    <property type="entry name" value="Ribosomal_uS7"/>
</dbReference>
<dbReference type="InterPro" id="IPR005717">
    <property type="entry name" value="Ribosomal_uS7_bac/org-type"/>
</dbReference>
<dbReference type="InterPro" id="IPR020606">
    <property type="entry name" value="Ribosomal_uS7_CS"/>
</dbReference>
<dbReference type="InterPro" id="IPR023798">
    <property type="entry name" value="Ribosomal_uS7_dom"/>
</dbReference>
<dbReference type="InterPro" id="IPR036823">
    <property type="entry name" value="Ribosomal_uS7_dom_sf"/>
</dbReference>
<dbReference type="NCBIfam" id="TIGR01029">
    <property type="entry name" value="rpsG_bact"/>
    <property type="match status" value="1"/>
</dbReference>
<dbReference type="PANTHER" id="PTHR11205">
    <property type="entry name" value="RIBOSOMAL PROTEIN S7"/>
    <property type="match status" value="1"/>
</dbReference>
<dbReference type="Pfam" id="PF00177">
    <property type="entry name" value="Ribosomal_S7"/>
    <property type="match status" value="1"/>
</dbReference>
<dbReference type="PIRSF" id="PIRSF002122">
    <property type="entry name" value="RPS7p_RPS7a_RPS5e_RPS7o"/>
    <property type="match status" value="1"/>
</dbReference>
<dbReference type="SUPFAM" id="SSF47973">
    <property type="entry name" value="Ribosomal protein S7"/>
    <property type="match status" value="1"/>
</dbReference>
<dbReference type="PROSITE" id="PS00052">
    <property type="entry name" value="RIBOSOMAL_S7"/>
    <property type="match status" value="1"/>
</dbReference>
<name>RS7_GEOSW</name>
<keyword id="KW-0687">Ribonucleoprotein</keyword>
<keyword id="KW-0689">Ribosomal protein</keyword>
<keyword id="KW-0694">RNA-binding</keyword>
<keyword id="KW-0699">rRNA-binding</keyword>
<keyword id="KW-0820">tRNA-binding</keyword>
<gene>
    <name evidence="1" type="primary">rpsG</name>
    <name type="ordered locus">GWCH70_0107</name>
</gene>
<proteinExistence type="inferred from homology"/>
<comment type="function">
    <text evidence="1">One of the primary rRNA binding proteins, it binds directly to 16S rRNA where it nucleates assembly of the head domain of the 30S subunit. Is located at the subunit interface close to the decoding center, probably blocks exit of the E-site tRNA.</text>
</comment>
<comment type="subunit">
    <text evidence="1">Part of the 30S ribosomal subunit. Contacts proteins S9 and S11.</text>
</comment>
<comment type="similarity">
    <text evidence="1">Belongs to the universal ribosomal protein uS7 family.</text>
</comment>